<feature type="chain" id="PRO_1000191812" description="Transcriptional repressor NrdR">
    <location>
        <begin position="1"/>
        <end position="149"/>
    </location>
</feature>
<feature type="domain" description="ATP-cone" evidence="1">
    <location>
        <begin position="49"/>
        <end position="139"/>
    </location>
</feature>
<feature type="zinc finger region" evidence="1">
    <location>
        <begin position="3"/>
        <end position="34"/>
    </location>
</feature>
<organism>
    <name type="scientific">Shewanella baltica (strain OS223)</name>
    <dbReference type="NCBI Taxonomy" id="407976"/>
    <lineage>
        <taxon>Bacteria</taxon>
        <taxon>Pseudomonadati</taxon>
        <taxon>Pseudomonadota</taxon>
        <taxon>Gammaproteobacteria</taxon>
        <taxon>Alteromonadales</taxon>
        <taxon>Shewanellaceae</taxon>
        <taxon>Shewanella</taxon>
    </lineage>
</organism>
<sequence length="149" mass="17060">MHCPFCSATDTKVIDSRLVAEGHQVRRRRECTECHERFTTFEGAELVMPRVIKRDGSRQPFDEEKLQGGMLRAVEKRPVSMDEIEQALSKIKSTLRATGEREVPSEMVGNLMMEQLMSLDKVAYIRFASVYRAFEDVSEFGEAIAKLQK</sequence>
<protein>
    <recommendedName>
        <fullName evidence="1">Transcriptional repressor NrdR</fullName>
    </recommendedName>
</protein>
<dbReference type="EMBL" id="CP001252">
    <property type="protein sequence ID" value="ACK45723.1"/>
    <property type="molecule type" value="Genomic_DNA"/>
</dbReference>
<dbReference type="RefSeq" id="WP_006082643.1">
    <property type="nucleotide sequence ID" value="NC_011663.1"/>
</dbReference>
<dbReference type="SMR" id="B8E6W2"/>
<dbReference type="GeneID" id="11773354"/>
<dbReference type="KEGG" id="sbp:Sbal223_1210"/>
<dbReference type="HOGENOM" id="CLU_108412_0_0_6"/>
<dbReference type="Proteomes" id="UP000002507">
    <property type="component" value="Chromosome"/>
</dbReference>
<dbReference type="GO" id="GO:0005524">
    <property type="term" value="F:ATP binding"/>
    <property type="evidence" value="ECO:0007669"/>
    <property type="project" value="UniProtKB-KW"/>
</dbReference>
<dbReference type="GO" id="GO:0003677">
    <property type="term" value="F:DNA binding"/>
    <property type="evidence" value="ECO:0007669"/>
    <property type="project" value="UniProtKB-KW"/>
</dbReference>
<dbReference type="GO" id="GO:0008270">
    <property type="term" value="F:zinc ion binding"/>
    <property type="evidence" value="ECO:0007669"/>
    <property type="project" value="UniProtKB-UniRule"/>
</dbReference>
<dbReference type="GO" id="GO:0045892">
    <property type="term" value="P:negative regulation of DNA-templated transcription"/>
    <property type="evidence" value="ECO:0007669"/>
    <property type="project" value="UniProtKB-UniRule"/>
</dbReference>
<dbReference type="HAMAP" id="MF_00440">
    <property type="entry name" value="NrdR"/>
    <property type="match status" value="1"/>
</dbReference>
<dbReference type="InterPro" id="IPR005144">
    <property type="entry name" value="ATP-cone_dom"/>
</dbReference>
<dbReference type="InterPro" id="IPR055173">
    <property type="entry name" value="NrdR-like_N"/>
</dbReference>
<dbReference type="InterPro" id="IPR003796">
    <property type="entry name" value="RNR_NrdR-like"/>
</dbReference>
<dbReference type="NCBIfam" id="TIGR00244">
    <property type="entry name" value="transcriptional regulator NrdR"/>
    <property type="match status" value="1"/>
</dbReference>
<dbReference type="PANTHER" id="PTHR30455">
    <property type="entry name" value="TRANSCRIPTIONAL REPRESSOR NRDR"/>
    <property type="match status" value="1"/>
</dbReference>
<dbReference type="PANTHER" id="PTHR30455:SF2">
    <property type="entry name" value="TRANSCRIPTIONAL REPRESSOR NRDR"/>
    <property type="match status" value="1"/>
</dbReference>
<dbReference type="Pfam" id="PF03477">
    <property type="entry name" value="ATP-cone"/>
    <property type="match status" value="1"/>
</dbReference>
<dbReference type="Pfam" id="PF22811">
    <property type="entry name" value="Zn_ribbon_NrdR"/>
    <property type="match status" value="1"/>
</dbReference>
<dbReference type="PROSITE" id="PS51161">
    <property type="entry name" value="ATP_CONE"/>
    <property type="match status" value="1"/>
</dbReference>
<accession>B8E6W2</accession>
<gene>
    <name evidence="1" type="primary">nrdR</name>
    <name type="ordered locus">Sbal223_1210</name>
</gene>
<comment type="function">
    <text evidence="1">Negatively regulates transcription of bacterial ribonucleotide reductase nrd genes and operons by binding to NrdR-boxes.</text>
</comment>
<comment type="cofactor">
    <cofactor evidence="1">
        <name>Zn(2+)</name>
        <dbReference type="ChEBI" id="CHEBI:29105"/>
    </cofactor>
    <text evidence="1">Binds 1 zinc ion.</text>
</comment>
<comment type="similarity">
    <text evidence="1">Belongs to the NrdR family.</text>
</comment>
<proteinExistence type="inferred from homology"/>
<name>NRDR_SHEB2</name>
<keyword id="KW-0067">ATP-binding</keyword>
<keyword id="KW-0238">DNA-binding</keyword>
<keyword id="KW-0479">Metal-binding</keyword>
<keyword id="KW-0547">Nucleotide-binding</keyword>
<keyword id="KW-0678">Repressor</keyword>
<keyword id="KW-0804">Transcription</keyword>
<keyword id="KW-0805">Transcription regulation</keyword>
<keyword id="KW-0862">Zinc</keyword>
<keyword id="KW-0863">Zinc-finger</keyword>
<reference key="1">
    <citation type="submission" date="2008-12" db="EMBL/GenBank/DDBJ databases">
        <title>Complete sequence of chromosome of Shewanella baltica OS223.</title>
        <authorList>
            <consortium name="US DOE Joint Genome Institute"/>
            <person name="Lucas S."/>
            <person name="Copeland A."/>
            <person name="Lapidus A."/>
            <person name="Glavina del Rio T."/>
            <person name="Dalin E."/>
            <person name="Tice H."/>
            <person name="Bruce D."/>
            <person name="Goodwin L."/>
            <person name="Pitluck S."/>
            <person name="Chertkov O."/>
            <person name="Meincke L."/>
            <person name="Brettin T."/>
            <person name="Detter J.C."/>
            <person name="Han C."/>
            <person name="Kuske C.R."/>
            <person name="Larimer F."/>
            <person name="Land M."/>
            <person name="Hauser L."/>
            <person name="Kyrpides N."/>
            <person name="Ovchinnikova G."/>
            <person name="Brettar I."/>
            <person name="Rodrigues J."/>
            <person name="Konstantinidis K."/>
            <person name="Tiedje J."/>
        </authorList>
    </citation>
    <scope>NUCLEOTIDE SEQUENCE [LARGE SCALE GENOMIC DNA]</scope>
    <source>
        <strain>OS223</strain>
    </source>
</reference>
<evidence type="ECO:0000255" key="1">
    <source>
        <dbReference type="HAMAP-Rule" id="MF_00440"/>
    </source>
</evidence>